<proteinExistence type="inferred from homology"/>
<keyword id="KW-0175">Coiled coil</keyword>
<keyword id="KW-0963">Cytoplasm</keyword>
<keyword id="KW-0597">Phosphoprotein</keyword>
<comment type="subcellular location">
    <subcellularLocation>
        <location evidence="1">Cytoplasm</location>
    </subcellularLocation>
</comment>
<comment type="similarity">
    <text evidence="5">Belongs to the TDA11 family.</text>
</comment>
<gene>
    <name type="primary">TDA11</name>
    <name type="ORF">AWRI796_2219</name>
</gene>
<accession>E7KDI6</accession>
<name>TDA11_YEASA</name>
<reference key="1">
    <citation type="journal article" date="2011" name="PLoS Genet.">
        <title>Whole-genome comparison reveals novel genetic elements that characterize the genome of industrial strains of Saccharomyces cerevisiae.</title>
        <authorList>
            <person name="Borneman A.R."/>
            <person name="Desany B.A."/>
            <person name="Riches D."/>
            <person name="Affourtit J.P."/>
            <person name="Forgan A.H."/>
            <person name="Pretorius I.S."/>
            <person name="Egholm M."/>
            <person name="Chambers P.J."/>
        </authorList>
    </citation>
    <scope>NUCLEOTIDE SEQUENCE [LARGE SCALE GENOMIC DNA]</scope>
    <source>
        <strain>AWRI796</strain>
    </source>
</reference>
<dbReference type="EMBL" id="ADVS01000029">
    <property type="protein sequence ID" value="EGA74590.1"/>
    <property type="molecule type" value="Genomic_DNA"/>
</dbReference>
<dbReference type="SMR" id="E7KDI6"/>
<dbReference type="HOGENOM" id="CLU_046807_0_0_1"/>
<dbReference type="OMA" id="ERTLNWD"/>
<dbReference type="OrthoDB" id="4036304at2759"/>
<dbReference type="GO" id="GO:0005737">
    <property type="term" value="C:cytoplasm"/>
    <property type="evidence" value="ECO:0007669"/>
    <property type="project" value="UniProtKB-SubCell"/>
</dbReference>
<dbReference type="InterPro" id="IPR031388">
    <property type="entry name" value="Tda11"/>
</dbReference>
<dbReference type="Pfam" id="PF17084">
    <property type="entry name" value="TDA11"/>
    <property type="match status" value="1"/>
</dbReference>
<protein>
    <recommendedName>
        <fullName>Topoisomerase I damage affected protein 11</fullName>
    </recommendedName>
</protein>
<evidence type="ECO:0000250" key="1"/>
<evidence type="ECO:0000250" key="2">
    <source>
        <dbReference type="UniProtKB" id="P38854"/>
    </source>
</evidence>
<evidence type="ECO:0000255" key="3"/>
<evidence type="ECO:0000256" key="4">
    <source>
        <dbReference type="SAM" id="MobiDB-lite"/>
    </source>
</evidence>
<evidence type="ECO:0000305" key="5"/>
<organism>
    <name type="scientific">Saccharomyces cerevisiae (strain AWRI796)</name>
    <name type="common">Baker's yeast</name>
    <dbReference type="NCBI Taxonomy" id="764097"/>
    <lineage>
        <taxon>Eukaryota</taxon>
        <taxon>Fungi</taxon>
        <taxon>Dikarya</taxon>
        <taxon>Ascomycota</taxon>
        <taxon>Saccharomycotina</taxon>
        <taxon>Saccharomycetes</taxon>
        <taxon>Saccharomycetales</taxon>
        <taxon>Saccharomycetaceae</taxon>
        <taxon>Saccharomyces</taxon>
    </lineage>
</organism>
<sequence>MNKFDEFIESNEKDLDVDTSTRNSIISMSPVRKTGRKIRSASSNGYRLEHHRTSSAGSMHSQRLMTPTRLNDQDHPLQAKPDARRVVTRHSSVSVPNAMSKRRSLIQPMVVPTTPESQNNLPSVSHSEGSYGIPLESTTVLSSEQAMASGLRRSRNGSSQSVNSMIATTIPTNGVDVSALLQSLATKELELLECKQKIEDLKKQTQHEEQNYTRRARELHELKEQVSKHLDPSLNTPVKNRAFSPVYQNIPLESRTENAGNSSLPSSVSKPKNMGHQSTNQSRSVSPQDIQERRQRDDSSDSSKQSLWSKPLALFNQFDKIIQHEIERTLNWDDSLSGTPEVQEGTPTSNSESSAQQYDNEAPGARQKSPSQGSVSRSLWSFVSDVKAGLLGIEEENDNDVITDNRCDPVYKSDRQHEQKKSTHKITNRGQAEDSGDDSSLNNEEI</sequence>
<feature type="chain" id="PRO_0000410766" description="Topoisomerase I damage affected protein 11">
    <location>
        <begin position="1"/>
        <end position="446"/>
    </location>
</feature>
<feature type="region of interest" description="Disordered" evidence="4">
    <location>
        <begin position="32"/>
        <end position="62"/>
    </location>
</feature>
<feature type="region of interest" description="Disordered" evidence="4">
    <location>
        <begin position="252"/>
        <end position="306"/>
    </location>
</feature>
<feature type="region of interest" description="Disordered" evidence="4">
    <location>
        <begin position="332"/>
        <end position="377"/>
    </location>
</feature>
<feature type="region of interest" description="Disordered" evidence="4">
    <location>
        <begin position="392"/>
        <end position="446"/>
    </location>
</feature>
<feature type="coiled-coil region" evidence="3">
    <location>
        <begin position="179"/>
        <end position="231"/>
    </location>
</feature>
<feature type="compositionally biased region" description="Polar residues" evidence="4">
    <location>
        <begin position="257"/>
        <end position="287"/>
    </location>
</feature>
<feature type="compositionally biased region" description="Basic and acidic residues" evidence="4">
    <location>
        <begin position="290"/>
        <end position="301"/>
    </location>
</feature>
<feature type="compositionally biased region" description="Polar residues" evidence="4">
    <location>
        <begin position="332"/>
        <end position="359"/>
    </location>
</feature>
<feature type="compositionally biased region" description="Polar residues" evidence="4">
    <location>
        <begin position="368"/>
        <end position="377"/>
    </location>
</feature>
<feature type="compositionally biased region" description="Basic and acidic residues" evidence="4">
    <location>
        <begin position="403"/>
        <end position="421"/>
    </location>
</feature>
<feature type="modified residue" description="Phosphothreonine" evidence="2">
    <location>
        <position position="236"/>
    </location>
</feature>
<feature type="modified residue" description="Phosphoserine" evidence="2">
    <location>
        <position position="244"/>
    </location>
</feature>
<feature type="modified residue" description="Phosphoserine" evidence="2">
    <location>
        <position position="286"/>
    </location>
</feature>